<protein>
    <recommendedName>
        <fullName evidence="1">GTPase Obg</fullName>
        <ecNumber evidence="1">3.6.5.-</ecNumber>
    </recommendedName>
    <alternativeName>
        <fullName evidence="1">GTP-binding protein Obg</fullName>
    </alternativeName>
</protein>
<reference key="1">
    <citation type="journal article" date="2006" name="Genome Res.">
        <title>Skewed genomic variability in strains of the toxigenic bacterial pathogen, Clostridium perfringens.</title>
        <authorList>
            <person name="Myers G.S.A."/>
            <person name="Rasko D.A."/>
            <person name="Cheung J.K."/>
            <person name="Ravel J."/>
            <person name="Seshadri R."/>
            <person name="DeBoy R.T."/>
            <person name="Ren Q."/>
            <person name="Varga J."/>
            <person name="Awad M.M."/>
            <person name="Brinkac L.M."/>
            <person name="Daugherty S.C."/>
            <person name="Haft D.H."/>
            <person name="Dodson R.J."/>
            <person name="Madupu R."/>
            <person name="Nelson W.C."/>
            <person name="Rosovitz M.J."/>
            <person name="Sullivan S.A."/>
            <person name="Khouri H."/>
            <person name="Dimitrov G.I."/>
            <person name="Watkins K.L."/>
            <person name="Mulligan S."/>
            <person name="Benton J."/>
            <person name="Radune D."/>
            <person name="Fisher D.J."/>
            <person name="Atkins H.S."/>
            <person name="Hiscox T."/>
            <person name="Jost B.H."/>
            <person name="Billington S.J."/>
            <person name="Songer J.G."/>
            <person name="McClane B.A."/>
            <person name="Titball R.W."/>
            <person name="Rood J.I."/>
            <person name="Melville S.B."/>
            <person name="Paulsen I.T."/>
        </authorList>
    </citation>
    <scope>NUCLEOTIDE SEQUENCE [LARGE SCALE GENOMIC DNA]</scope>
    <source>
        <strain>SM101 / Type A</strain>
    </source>
</reference>
<evidence type="ECO:0000255" key="1">
    <source>
        <dbReference type="HAMAP-Rule" id="MF_01454"/>
    </source>
</evidence>
<evidence type="ECO:0000255" key="2">
    <source>
        <dbReference type="PROSITE-ProRule" id="PRU01229"/>
    </source>
</evidence>
<evidence type="ECO:0000255" key="3">
    <source>
        <dbReference type="PROSITE-ProRule" id="PRU01231"/>
    </source>
</evidence>
<keyword id="KW-0963">Cytoplasm</keyword>
<keyword id="KW-0342">GTP-binding</keyword>
<keyword id="KW-0378">Hydrolase</keyword>
<keyword id="KW-0460">Magnesium</keyword>
<keyword id="KW-0479">Metal-binding</keyword>
<keyword id="KW-0547">Nucleotide-binding</keyword>
<organism>
    <name type="scientific">Clostridium perfringens (strain SM101 / Type A)</name>
    <dbReference type="NCBI Taxonomy" id="289380"/>
    <lineage>
        <taxon>Bacteria</taxon>
        <taxon>Bacillati</taxon>
        <taxon>Bacillota</taxon>
        <taxon>Clostridia</taxon>
        <taxon>Eubacteriales</taxon>
        <taxon>Clostridiaceae</taxon>
        <taxon>Clostridium</taxon>
    </lineage>
</organism>
<comment type="function">
    <text evidence="1">An essential GTPase which binds GTP, GDP and possibly (p)ppGpp with moderate affinity, with high nucleotide exchange rates and a fairly low GTP hydrolysis rate. Plays a role in control of the cell cycle, stress response, ribosome biogenesis and in those bacteria that undergo differentiation, in morphogenesis control.</text>
</comment>
<comment type="cofactor">
    <cofactor evidence="1">
        <name>Mg(2+)</name>
        <dbReference type="ChEBI" id="CHEBI:18420"/>
    </cofactor>
</comment>
<comment type="subunit">
    <text evidence="1">Monomer.</text>
</comment>
<comment type="subcellular location">
    <subcellularLocation>
        <location evidence="1">Cytoplasm</location>
    </subcellularLocation>
</comment>
<comment type="similarity">
    <text evidence="1">Belongs to the TRAFAC class OBG-HflX-like GTPase superfamily. OBG GTPase family.</text>
</comment>
<proteinExistence type="inferred from homology"/>
<dbReference type="EC" id="3.6.5.-" evidence="1"/>
<dbReference type="EMBL" id="CP000312">
    <property type="protein sequence ID" value="ABG87694.1"/>
    <property type="molecule type" value="Genomic_DNA"/>
</dbReference>
<dbReference type="SMR" id="Q0SR54"/>
<dbReference type="KEGG" id="cpr:CPR_2094"/>
<dbReference type="Proteomes" id="UP000001824">
    <property type="component" value="Chromosome"/>
</dbReference>
<dbReference type="GO" id="GO:0005737">
    <property type="term" value="C:cytoplasm"/>
    <property type="evidence" value="ECO:0007669"/>
    <property type="project" value="UniProtKB-SubCell"/>
</dbReference>
<dbReference type="GO" id="GO:0005525">
    <property type="term" value="F:GTP binding"/>
    <property type="evidence" value="ECO:0007669"/>
    <property type="project" value="UniProtKB-UniRule"/>
</dbReference>
<dbReference type="GO" id="GO:0003924">
    <property type="term" value="F:GTPase activity"/>
    <property type="evidence" value="ECO:0007669"/>
    <property type="project" value="UniProtKB-UniRule"/>
</dbReference>
<dbReference type="GO" id="GO:0000287">
    <property type="term" value="F:magnesium ion binding"/>
    <property type="evidence" value="ECO:0007669"/>
    <property type="project" value="InterPro"/>
</dbReference>
<dbReference type="GO" id="GO:0042254">
    <property type="term" value="P:ribosome biogenesis"/>
    <property type="evidence" value="ECO:0007669"/>
    <property type="project" value="UniProtKB-UniRule"/>
</dbReference>
<dbReference type="CDD" id="cd01898">
    <property type="entry name" value="Obg"/>
    <property type="match status" value="1"/>
</dbReference>
<dbReference type="FunFam" id="2.70.210.12:FF:000001">
    <property type="entry name" value="GTPase Obg"/>
    <property type="match status" value="1"/>
</dbReference>
<dbReference type="Gene3D" id="3.30.300.350">
    <property type="entry name" value="GTP-binding protein OBG, C-terminal domain"/>
    <property type="match status" value="1"/>
</dbReference>
<dbReference type="Gene3D" id="2.70.210.12">
    <property type="entry name" value="GTP1/OBG domain"/>
    <property type="match status" value="1"/>
</dbReference>
<dbReference type="Gene3D" id="3.40.50.300">
    <property type="entry name" value="P-loop containing nucleotide triphosphate hydrolases"/>
    <property type="match status" value="1"/>
</dbReference>
<dbReference type="HAMAP" id="MF_01454">
    <property type="entry name" value="GTPase_Obg"/>
    <property type="match status" value="1"/>
</dbReference>
<dbReference type="InterPro" id="IPR031167">
    <property type="entry name" value="G_OBG"/>
</dbReference>
<dbReference type="InterPro" id="IPR006073">
    <property type="entry name" value="GTP-bd"/>
</dbReference>
<dbReference type="InterPro" id="IPR014100">
    <property type="entry name" value="GTP-bd_Obg/CgtA"/>
</dbReference>
<dbReference type="InterPro" id="IPR036346">
    <property type="entry name" value="GTP-bd_prot_GTP1/OBG_C_sf"/>
</dbReference>
<dbReference type="InterPro" id="IPR006074">
    <property type="entry name" value="GTP1-OBG_CS"/>
</dbReference>
<dbReference type="InterPro" id="IPR006169">
    <property type="entry name" value="GTP1_OBG_dom"/>
</dbReference>
<dbReference type="InterPro" id="IPR036726">
    <property type="entry name" value="GTP1_OBG_dom_sf"/>
</dbReference>
<dbReference type="InterPro" id="IPR045086">
    <property type="entry name" value="OBG_GTPase"/>
</dbReference>
<dbReference type="InterPro" id="IPR015349">
    <property type="entry name" value="OCT_dom"/>
</dbReference>
<dbReference type="InterPro" id="IPR027417">
    <property type="entry name" value="P-loop_NTPase"/>
</dbReference>
<dbReference type="InterPro" id="IPR005225">
    <property type="entry name" value="Small_GTP-bd"/>
</dbReference>
<dbReference type="NCBIfam" id="TIGR02729">
    <property type="entry name" value="Obg_CgtA"/>
    <property type="match status" value="1"/>
</dbReference>
<dbReference type="NCBIfam" id="TIGR03595">
    <property type="entry name" value="Obg_CgtA_exten"/>
    <property type="match status" value="1"/>
</dbReference>
<dbReference type="NCBIfam" id="NF008954">
    <property type="entry name" value="PRK12296.1"/>
    <property type="match status" value="1"/>
</dbReference>
<dbReference type="NCBIfam" id="NF008955">
    <property type="entry name" value="PRK12297.1"/>
    <property type="match status" value="1"/>
</dbReference>
<dbReference type="NCBIfam" id="NF008956">
    <property type="entry name" value="PRK12299.1"/>
    <property type="match status" value="1"/>
</dbReference>
<dbReference type="NCBIfam" id="TIGR00231">
    <property type="entry name" value="small_GTP"/>
    <property type="match status" value="1"/>
</dbReference>
<dbReference type="PANTHER" id="PTHR11702">
    <property type="entry name" value="DEVELOPMENTALLY REGULATED GTP-BINDING PROTEIN-RELATED"/>
    <property type="match status" value="1"/>
</dbReference>
<dbReference type="PANTHER" id="PTHR11702:SF31">
    <property type="entry name" value="MITOCHONDRIAL RIBOSOME-ASSOCIATED GTPASE 2"/>
    <property type="match status" value="1"/>
</dbReference>
<dbReference type="Pfam" id="PF09269">
    <property type="entry name" value="DUF1967"/>
    <property type="match status" value="1"/>
</dbReference>
<dbReference type="Pfam" id="PF01018">
    <property type="entry name" value="GTP1_OBG"/>
    <property type="match status" value="1"/>
</dbReference>
<dbReference type="Pfam" id="PF01926">
    <property type="entry name" value="MMR_HSR1"/>
    <property type="match status" value="1"/>
</dbReference>
<dbReference type="PRINTS" id="PR00326">
    <property type="entry name" value="GTP1OBG"/>
</dbReference>
<dbReference type="SUPFAM" id="SSF102741">
    <property type="entry name" value="Obg GTP-binding protein C-terminal domain"/>
    <property type="match status" value="1"/>
</dbReference>
<dbReference type="SUPFAM" id="SSF82051">
    <property type="entry name" value="Obg GTP-binding protein N-terminal domain"/>
    <property type="match status" value="1"/>
</dbReference>
<dbReference type="SUPFAM" id="SSF52540">
    <property type="entry name" value="P-loop containing nucleoside triphosphate hydrolases"/>
    <property type="match status" value="1"/>
</dbReference>
<dbReference type="PROSITE" id="PS51710">
    <property type="entry name" value="G_OBG"/>
    <property type="match status" value="1"/>
</dbReference>
<dbReference type="PROSITE" id="PS00905">
    <property type="entry name" value="GTP1_OBG"/>
    <property type="match status" value="1"/>
</dbReference>
<dbReference type="PROSITE" id="PS51883">
    <property type="entry name" value="OBG"/>
    <property type="match status" value="1"/>
</dbReference>
<dbReference type="PROSITE" id="PS51881">
    <property type="entry name" value="OCT"/>
    <property type="match status" value="1"/>
</dbReference>
<feature type="chain" id="PRO_0000385852" description="GTPase Obg">
    <location>
        <begin position="1"/>
        <end position="428"/>
    </location>
</feature>
<feature type="domain" description="Obg" evidence="3">
    <location>
        <begin position="1"/>
        <end position="158"/>
    </location>
</feature>
<feature type="domain" description="OBG-type G" evidence="1">
    <location>
        <begin position="159"/>
        <end position="331"/>
    </location>
</feature>
<feature type="domain" description="OCT" evidence="2">
    <location>
        <begin position="345"/>
        <end position="428"/>
    </location>
</feature>
<feature type="binding site" evidence="1">
    <location>
        <begin position="165"/>
        <end position="172"/>
    </location>
    <ligand>
        <name>GTP</name>
        <dbReference type="ChEBI" id="CHEBI:37565"/>
    </ligand>
</feature>
<feature type="binding site" evidence="1">
    <location>
        <position position="172"/>
    </location>
    <ligand>
        <name>Mg(2+)</name>
        <dbReference type="ChEBI" id="CHEBI:18420"/>
    </ligand>
</feature>
<feature type="binding site" evidence="1">
    <location>
        <begin position="190"/>
        <end position="194"/>
    </location>
    <ligand>
        <name>GTP</name>
        <dbReference type="ChEBI" id="CHEBI:37565"/>
    </ligand>
</feature>
<feature type="binding site" evidence="1">
    <location>
        <position position="192"/>
    </location>
    <ligand>
        <name>Mg(2+)</name>
        <dbReference type="ChEBI" id="CHEBI:18420"/>
    </ligand>
</feature>
<feature type="binding site" evidence="1">
    <location>
        <begin position="212"/>
        <end position="215"/>
    </location>
    <ligand>
        <name>GTP</name>
        <dbReference type="ChEBI" id="CHEBI:37565"/>
    </ligand>
</feature>
<feature type="binding site" evidence="1">
    <location>
        <begin position="282"/>
        <end position="285"/>
    </location>
    <ligand>
        <name>GTP</name>
        <dbReference type="ChEBI" id="CHEBI:37565"/>
    </ligand>
</feature>
<feature type="binding site" evidence="1">
    <location>
        <begin position="312"/>
        <end position="314"/>
    </location>
    <ligand>
        <name>GTP</name>
        <dbReference type="ChEBI" id="CHEBI:37565"/>
    </ligand>
</feature>
<accession>Q0SR54</accession>
<gene>
    <name evidence="1" type="primary">obg</name>
    <name type="ordered locus">CPR_2094</name>
</gene>
<sequence length="428" mass="47500">MFIDTAKIFVKSGDGGHGSVSFRREKYVPLGGPDGGDGGKGGDVTFVVDPGMTTLLDFKYKRKFVAGRGQDGQGSKCYGRDGENLTIKVPMGTIIRDVETNKVMADLSHRDDTYTICRGGKGGKGNCKFCTPTRQAPTFAEPGMPGEERWVALELKLLADVGLLGFPNVGKSTLLSVVTKAKPKIANYHFTTLKPNLGVVAVPGIEPFVMADVPGIIEGASEGVGLGLDFLRHIERTRLLIHVVDISGVEGRDAVEDFKRINEELKNYSVKLWDRPQIVVANKCDMLFDEEIFENFKAEVNKMGFDKVFKMSAATSQGVEEVIKEAARMLKDIPVTDLEIPEDERFIPEDKKFTYTINPIEEDGLKVYVVEGSFVDRLLLAVNVNDPDSLRYFHKVLNNKGIFHELREMGIEDGDMVRLNDFEFEYLL</sequence>
<name>OBG_CLOPS</name>